<feature type="chain" id="PRO_0000308745" description="Pre-rRNA-processing protein IPI3">
    <location>
        <begin position="1"/>
        <end position="426"/>
    </location>
</feature>
<feature type="repeat" description="WD 1">
    <location>
        <begin position="75"/>
        <end position="114"/>
    </location>
</feature>
<feature type="repeat" description="WD 2">
    <location>
        <begin position="117"/>
        <end position="154"/>
    </location>
</feature>
<feature type="repeat" description="WD 3">
    <location>
        <begin position="164"/>
        <end position="206"/>
    </location>
</feature>
<feature type="repeat" description="WD 4">
    <location>
        <begin position="269"/>
        <end position="308"/>
    </location>
</feature>
<gene>
    <name type="primary">IPI3</name>
    <name type="ordered locus">YALI0D13948g</name>
</gene>
<reference key="1">
    <citation type="journal article" date="2004" name="Nature">
        <title>Genome evolution in yeasts.</title>
        <authorList>
            <person name="Dujon B."/>
            <person name="Sherman D."/>
            <person name="Fischer G."/>
            <person name="Durrens P."/>
            <person name="Casaregola S."/>
            <person name="Lafontaine I."/>
            <person name="de Montigny J."/>
            <person name="Marck C."/>
            <person name="Neuveglise C."/>
            <person name="Talla E."/>
            <person name="Goffard N."/>
            <person name="Frangeul L."/>
            <person name="Aigle M."/>
            <person name="Anthouard V."/>
            <person name="Babour A."/>
            <person name="Barbe V."/>
            <person name="Barnay S."/>
            <person name="Blanchin S."/>
            <person name="Beckerich J.-M."/>
            <person name="Beyne E."/>
            <person name="Bleykasten C."/>
            <person name="Boisrame A."/>
            <person name="Boyer J."/>
            <person name="Cattolico L."/>
            <person name="Confanioleri F."/>
            <person name="de Daruvar A."/>
            <person name="Despons L."/>
            <person name="Fabre E."/>
            <person name="Fairhead C."/>
            <person name="Ferry-Dumazet H."/>
            <person name="Groppi A."/>
            <person name="Hantraye F."/>
            <person name="Hennequin C."/>
            <person name="Jauniaux N."/>
            <person name="Joyet P."/>
            <person name="Kachouri R."/>
            <person name="Kerrest A."/>
            <person name="Koszul R."/>
            <person name="Lemaire M."/>
            <person name="Lesur I."/>
            <person name="Ma L."/>
            <person name="Muller H."/>
            <person name="Nicaud J.-M."/>
            <person name="Nikolski M."/>
            <person name="Oztas S."/>
            <person name="Ozier-Kalogeropoulos O."/>
            <person name="Pellenz S."/>
            <person name="Potier S."/>
            <person name="Richard G.-F."/>
            <person name="Straub M.-L."/>
            <person name="Suleau A."/>
            <person name="Swennen D."/>
            <person name="Tekaia F."/>
            <person name="Wesolowski-Louvel M."/>
            <person name="Westhof E."/>
            <person name="Wirth B."/>
            <person name="Zeniou-Meyer M."/>
            <person name="Zivanovic Y."/>
            <person name="Bolotin-Fukuhara M."/>
            <person name="Thierry A."/>
            <person name="Bouchier C."/>
            <person name="Caudron B."/>
            <person name="Scarpelli C."/>
            <person name="Gaillardin C."/>
            <person name="Weissenbach J."/>
            <person name="Wincker P."/>
            <person name="Souciet J.-L."/>
        </authorList>
    </citation>
    <scope>NUCLEOTIDE SEQUENCE [LARGE SCALE GENOMIC DNA]</scope>
    <source>
        <strain>CLIB 122 / E 150</strain>
    </source>
</reference>
<dbReference type="EMBL" id="CR382130">
    <property type="protein sequence ID" value="CAG80997.1"/>
    <property type="molecule type" value="Genomic_DNA"/>
</dbReference>
<dbReference type="RefSeq" id="XP_502809.1">
    <property type="nucleotide sequence ID" value="XM_502809.1"/>
</dbReference>
<dbReference type="SMR" id="Q6C953"/>
<dbReference type="FunCoup" id="Q6C953">
    <property type="interactions" value="449"/>
</dbReference>
<dbReference type="STRING" id="284591.Q6C953"/>
<dbReference type="EnsemblFungi" id="CAG80997">
    <property type="protein sequence ID" value="CAG80997"/>
    <property type="gene ID" value="YALI0_D13948g"/>
</dbReference>
<dbReference type="KEGG" id="yli:2910269"/>
<dbReference type="VEuPathDB" id="FungiDB:YALI0_D13948g"/>
<dbReference type="HOGENOM" id="CLU_029749_4_0_1"/>
<dbReference type="InParanoid" id="Q6C953"/>
<dbReference type="OMA" id="INIAICW"/>
<dbReference type="OrthoDB" id="1413at4891"/>
<dbReference type="Proteomes" id="UP000001300">
    <property type="component" value="Chromosome D"/>
</dbReference>
<dbReference type="GO" id="GO:0000792">
    <property type="term" value="C:heterochromatin"/>
    <property type="evidence" value="ECO:0007669"/>
    <property type="project" value="EnsemblFungi"/>
</dbReference>
<dbReference type="GO" id="GO:0005656">
    <property type="term" value="C:nuclear pre-replicative complex"/>
    <property type="evidence" value="ECO:0000318"/>
    <property type="project" value="GO_Central"/>
</dbReference>
<dbReference type="GO" id="GO:0120330">
    <property type="term" value="C:rixosome complex"/>
    <property type="evidence" value="ECO:0000318"/>
    <property type="project" value="GO_Central"/>
</dbReference>
<dbReference type="GO" id="GO:0006261">
    <property type="term" value="P:DNA-templated DNA replication"/>
    <property type="evidence" value="ECO:0000318"/>
    <property type="project" value="GO_Central"/>
</dbReference>
<dbReference type="GO" id="GO:0006364">
    <property type="term" value="P:rRNA processing"/>
    <property type="evidence" value="ECO:0000318"/>
    <property type="project" value="GO_Central"/>
</dbReference>
<dbReference type="Gene3D" id="2.130.10.10">
    <property type="entry name" value="YVTN repeat-like/Quinoprotein amine dehydrogenase"/>
    <property type="match status" value="2"/>
</dbReference>
<dbReference type="InterPro" id="IPR015943">
    <property type="entry name" value="WD40/YVTN_repeat-like_dom_sf"/>
</dbReference>
<dbReference type="InterPro" id="IPR019775">
    <property type="entry name" value="WD40_repeat_CS"/>
</dbReference>
<dbReference type="InterPro" id="IPR036322">
    <property type="entry name" value="WD40_repeat_dom_sf"/>
</dbReference>
<dbReference type="InterPro" id="IPR001680">
    <property type="entry name" value="WD40_rpt"/>
</dbReference>
<dbReference type="InterPro" id="IPR045227">
    <property type="entry name" value="WDR18/Ipi3/RID3"/>
</dbReference>
<dbReference type="PANTHER" id="PTHR18763:SF0">
    <property type="entry name" value="WD REPEAT-CONTAINING PROTEIN 18"/>
    <property type="match status" value="1"/>
</dbReference>
<dbReference type="PANTHER" id="PTHR18763">
    <property type="entry name" value="WD-REPEAT PROTEIN 18"/>
    <property type="match status" value="1"/>
</dbReference>
<dbReference type="Pfam" id="PF00400">
    <property type="entry name" value="WD40"/>
    <property type="match status" value="3"/>
</dbReference>
<dbReference type="SMART" id="SM00320">
    <property type="entry name" value="WD40"/>
    <property type="match status" value="4"/>
</dbReference>
<dbReference type="SUPFAM" id="SSF50978">
    <property type="entry name" value="WD40 repeat-like"/>
    <property type="match status" value="1"/>
</dbReference>
<dbReference type="PROSITE" id="PS00678">
    <property type="entry name" value="WD_REPEATS_1"/>
    <property type="match status" value="1"/>
</dbReference>
<dbReference type="PROSITE" id="PS50082">
    <property type="entry name" value="WD_REPEATS_2"/>
    <property type="match status" value="2"/>
</dbReference>
<dbReference type="PROSITE" id="PS50294">
    <property type="entry name" value="WD_REPEATS_REGION"/>
    <property type="match status" value="1"/>
</dbReference>
<keyword id="KW-0539">Nucleus</keyword>
<keyword id="KW-1185">Reference proteome</keyword>
<keyword id="KW-0677">Repeat</keyword>
<keyword id="KW-0690">Ribosome biogenesis</keyword>
<keyword id="KW-0698">rRNA processing</keyword>
<keyword id="KW-0853">WD repeat</keyword>
<protein>
    <recommendedName>
        <fullName>Pre-rRNA-processing protein IPI3</fullName>
    </recommendedName>
</protein>
<comment type="function">
    <text evidence="1">Component of the RIX1 complex required for processing of ITS2 sequences from 35S pre-rRNA.</text>
</comment>
<comment type="subunit">
    <text evidence="1">Component of the RIX1 complex, composed of IPI1, RIX1/IPI2 and IPI3 in a 1:2:2 stoichiometry. The complex interacts (via RIX1) with MDN1 (via its hexameric AAA ATPase ring) and the pre-60S ribosome particles.</text>
</comment>
<comment type="subcellular location">
    <subcellularLocation>
        <location evidence="1">Nucleus</location>
    </subcellularLocation>
</comment>
<comment type="similarity">
    <text evidence="2">Belongs to the WD repeat IPI3/WDR18 family.</text>
</comment>
<accession>Q6C953</accession>
<organism>
    <name type="scientific">Yarrowia lipolytica (strain CLIB 122 / E 150)</name>
    <name type="common">Yeast</name>
    <name type="synonym">Candida lipolytica</name>
    <dbReference type="NCBI Taxonomy" id="284591"/>
    <lineage>
        <taxon>Eukaryota</taxon>
        <taxon>Fungi</taxon>
        <taxon>Dikarya</taxon>
        <taxon>Ascomycota</taxon>
        <taxon>Saccharomycotina</taxon>
        <taxon>Dipodascomycetes</taxon>
        <taxon>Dipodascales</taxon>
        <taxon>Dipodascales incertae sedis</taxon>
        <taxon>Yarrowia</taxon>
    </lineage>
</organism>
<proteinExistence type="inferred from homology"/>
<evidence type="ECO:0000250" key="1">
    <source>
        <dbReference type="UniProtKB" id="P53877"/>
    </source>
</evidence>
<evidence type="ECO:0000305" key="2"/>
<name>IPI3_YARLI</name>
<sequence length="426" mass="46240">MEELIIYTTNKGACAVDLHSGNNITHFKNDETAPNLSVFLTNTPSGNPLLFSAQTKGAMMHVYNWNRESVDQQIVLPEKLSCLAASTCGTWLAGGSASGRLFVWELASGKLVFSREVHYQAVTKLAFTDGLLFSTSKDARVLGWSLVTMASDPKDCQPCITWTEHNLGVVDLVVGGGPTRDTRVFTVSTDKTVRIWDVSSTALLTTITLPAAETPTTLAVDQLERTLFVGCASGNILSVSLYDVSPSTGLVSVGGASGVVESGNVALSHHKSAVTSLALSFDATLLVSADDKGFICVWDLPSRQVSRSIKQPRAEMNPVTYVQTITTHGLPTEKYNPKTAVKLPMLKRVQDDKPEDHDILVKIQPRQKTVAHEDTLQQMVESAQFGGDSLAGKVVQLENELSQAKSSFASLKESHDTLWNIYQRQQ</sequence>